<dbReference type="EC" id="3.1.1.96" evidence="1"/>
<dbReference type="EMBL" id="AP006841">
    <property type="protein sequence ID" value="BAD46846.1"/>
    <property type="molecule type" value="Genomic_DNA"/>
</dbReference>
<dbReference type="RefSeq" id="WP_005796976.1">
    <property type="nucleotide sequence ID" value="NZ_UYXF01000007.1"/>
</dbReference>
<dbReference type="RefSeq" id="YP_097380.1">
    <property type="nucleotide sequence ID" value="NC_006347.1"/>
</dbReference>
<dbReference type="SMR" id="Q650H8"/>
<dbReference type="STRING" id="295405.BF0097"/>
<dbReference type="KEGG" id="bfr:BF0097"/>
<dbReference type="PATRIC" id="fig|295405.11.peg.135"/>
<dbReference type="HOGENOM" id="CLU_076901_1_0_10"/>
<dbReference type="OrthoDB" id="9801395at2"/>
<dbReference type="Proteomes" id="UP000002197">
    <property type="component" value="Chromosome"/>
</dbReference>
<dbReference type="GO" id="GO:0005737">
    <property type="term" value="C:cytoplasm"/>
    <property type="evidence" value="ECO:0007669"/>
    <property type="project" value="UniProtKB-SubCell"/>
</dbReference>
<dbReference type="GO" id="GO:0051500">
    <property type="term" value="F:D-tyrosyl-tRNA(Tyr) deacylase activity"/>
    <property type="evidence" value="ECO:0007669"/>
    <property type="project" value="TreeGrafter"/>
</dbReference>
<dbReference type="GO" id="GO:0106026">
    <property type="term" value="F:Gly-tRNA(Ala) deacylase activity"/>
    <property type="evidence" value="ECO:0007669"/>
    <property type="project" value="UniProtKB-UniRule"/>
</dbReference>
<dbReference type="GO" id="GO:0043908">
    <property type="term" value="F:Ser(Gly)-tRNA(Ala) hydrolase activity"/>
    <property type="evidence" value="ECO:0007669"/>
    <property type="project" value="UniProtKB-UniRule"/>
</dbReference>
<dbReference type="GO" id="GO:0000049">
    <property type="term" value="F:tRNA binding"/>
    <property type="evidence" value="ECO:0007669"/>
    <property type="project" value="UniProtKB-UniRule"/>
</dbReference>
<dbReference type="GO" id="GO:0019478">
    <property type="term" value="P:D-amino acid catabolic process"/>
    <property type="evidence" value="ECO:0007669"/>
    <property type="project" value="UniProtKB-UniRule"/>
</dbReference>
<dbReference type="CDD" id="cd00563">
    <property type="entry name" value="Dtyr_deacylase"/>
    <property type="match status" value="1"/>
</dbReference>
<dbReference type="FunFam" id="3.50.80.10:FF:000001">
    <property type="entry name" value="D-aminoacyl-tRNA deacylase"/>
    <property type="match status" value="1"/>
</dbReference>
<dbReference type="Gene3D" id="3.50.80.10">
    <property type="entry name" value="D-tyrosyl-tRNA(Tyr) deacylase"/>
    <property type="match status" value="1"/>
</dbReference>
<dbReference type="HAMAP" id="MF_00518">
    <property type="entry name" value="Deacylase_Dtd"/>
    <property type="match status" value="1"/>
</dbReference>
<dbReference type="InterPro" id="IPR003732">
    <property type="entry name" value="Daa-tRNA_deacyls_DTD"/>
</dbReference>
<dbReference type="InterPro" id="IPR023509">
    <property type="entry name" value="DTD-like_sf"/>
</dbReference>
<dbReference type="NCBIfam" id="TIGR00256">
    <property type="entry name" value="D-aminoacyl-tRNA deacylase"/>
    <property type="match status" value="1"/>
</dbReference>
<dbReference type="PANTHER" id="PTHR10472:SF5">
    <property type="entry name" value="D-AMINOACYL-TRNA DEACYLASE 1"/>
    <property type="match status" value="1"/>
</dbReference>
<dbReference type="PANTHER" id="PTHR10472">
    <property type="entry name" value="D-TYROSYL-TRNA TYR DEACYLASE"/>
    <property type="match status" value="1"/>
</dbReference>
<dbReference type="Pfam" id="PF02580">
    <property type="entry name" value="Tyr_Deacylase"/>
    <property type="match status" value="1"/>
</dbReference>
<dbReference type="SUPFAM" id="SSF69500">
    <property type="entry name" value="DTD-like"/>
    <property type="match status" value="1"/>
</dbReference>
<sequence>MRVVIQRVSHASVTIDGHCKSAIQKGMMILVGIEETDSREDIDWLCKKIVNLRIFDDENGVMNKSILEDEGNILVISQFTLHASTKKGNRPSYIKAAKPEISIPLYEQFCKDLSCALGKEVKTGEFGADMKVELLNDGPVTICIDTKNKE</sequence>
<accession>Q650H8</accession>
<feature type="chain" id="PRO_0000164519" description="D-aminoacyl-tRNA deacylase">
    <location>
        <begin position="1"/>
        <end position="150"/>
    </location>
</feature>
<feature type="short sequence motif" description="Gly-cisPro motif, important for rejection of L-amino acids" evidence="1">
    <location>
        <begin position="138"/>
        <end position="139"/>
    </location>
</feature>
<organism>
    <name type="scientific">Bacteroides fragilis (strain YCH46)</name>
    <dbReference type="NCBI Taxonomy" id="295405"/>
    <lineage>
        <taxon>Bacteria</taxon>
        <taxon>Pseudomonadati</taxon>
        <taxon>Bacteroidota</taxon>
        <taxon>Bacteroidia</taxon>
        <taxon>Bacteroidales</taxon>
        <taxon>Bacteroidaceae</taxon>
        <taxon>Bacteroides</taxon>
    </lineage>
</organism>
<comment type="function">
    <text evidence="1">An aminoacyl-tRNA editing enzyme that deacylates mischarged D-aminoacyl-tRNAs. Also deacylates mischarged glycyl-tRNA(Ala), protecting cells against glycine mischarging by AlaRS. Acts via tRNA-based rather than protein-based catalysis; rejects L-amino acids rather than detecting D-amino acids in the active site. By recycling D-aminoacyl-tRNA to D-amino acids and free tRNA molecules, this enzyme counteracts the toxicity associated with the formation of D-aminoacyl-tRNA entities in vivo and helps enforce protein L-homochirality.</text>
</comment>
<comment type="catalytic activity">
    <reaction evidence="1">
        <text>glycyl-tRNA(Ala) + H2O = tRNA(Ala) + glycine + H(+)</text>
        <dbReference type="Rhea" id="RHEA:53744"/>
        <dbReference type="Rhea" id="RHEA-COMP:9657"/>
        <dbReference type="Rhea" id="RHEA-COMP:13640"/>
        <dbReference type="ChEBI" id="CHEBI:15377"/>
        <dbReference type="ChEBI" id="CHEBI:15378"/>
        <dbReference type="ChEBI" id="CHEBI:57305"/>
        <dbReference type="ChEBI" id="CHEBI:78442"/>
        <dbReference type="ChEBI" id="CHEBI:78522"/>
        <dbReference type="EC" id="3.1.1.96"/>
    </reaction>
</comment>
<comment type="catalytic activity">
    <reaction evidence="1">
        <text>a D-aminoacyl-tRNA + H2O = a tRNA + a D-alpha-amino acid + H(+)</text>
        <dbReference type="Rhea" id="RHEA:13953"/>
        <dbReference type="Rhea" id="RHEA-COMP:10123"/>
        <dbReference type="Rhea" id="RHEA-COMP:10124"/>
        <dbReference type="ChEBI" id="CHEBI:15377"/>
        <dbReference type="ChEBI" id="CHEBI:15378"/>
        <dbReference type="ChEBI" id="CHEBI:59871"/>
        <dbReference type="ChEBI" id="CHEBI:78442"/>
        <dbReference type="ChEBI" id="CHEBI:79333"/>
        <dbReference type="EC" id="3.1.1.96"/>
    </reaction>
</comment>
<comment type="subunit">
    <text evidence="1">Homodimer.</text>
</comment>
<comment type="subcellular location">
    <subcellularLocation>
        <location evidence="1">Cytoplasm</location>
    </subcellularLocation>
</comment>
<comment type="domain">
    <text evidence="1">A Gly-cisPro motif from one monomer fits into the active site of the other monomer to allow specific chiral rejection of L-amino acids.</text>
</comment>
<comment type="similarity">
    <text evidence="1">Belongs to the DTD family.</text>
</comment>
<protein>
    <recommendedName>
        <fullName evidence="1">D-aminoacyl-tRNA deacylase</fullName>
        <shortName evidence="1">DTD</shortName>
        <ecNumber evidence="1">3.1.1.96</ecNumber>
    </recommendedName>
    <alternativeName>
        <fullName evidence="1">Gly-tRNA(Ala) deacylase</fullName>
    </alternativeName>
</protein>
<evidence type="ECO:0000255" key="1">
    <source>
        <dbReference type="HAMAP-Rule" id="MF_00518"/>
    </source>
</evidence>
<name>DTD_BACFR</name>
<proteinExistence type="inferred from homology"/>
<gene>
    <name evidence="1" type="primary">dtd</name>
    <name type="ordered locus">BF0097</name>
</gene>
<reference key="1">
    <citation type="journal article" date="2004" name="Proc. Natl. Acad. Sci. U.S.A.">
        <title>Genomic analysis of Bacteroides fragilis reveals extensive DNA inversions regulating cell surface adaptation.</title>
        <authorList>
            <person name="Kuwahara T."/>
            <person name="Yamashita A."/>
            <person name="Hirakawa H."/>
            <person name="Nakayama H."/>
            <person name="Toh H."/>
            <person name="Okada N."/>
            <person name="Kuhara S."/>
            <person name="Hattori M."/>
            <person name="Hayashi T."/>
            <person name="Ohnishi Y."/>
        </authorList>
    </citation>
    <scope>NUCLEOTIDE SEQUENCE [LARGE SCALE GENOMIC DNA]</scope>
    <source>
        <strain>YCH46</strain>
    </source>
</reference>
<keyword id="KW-0963">Cytoplasm</keyword>
<keyword id="KW-0378">Hydrolase</keyword>
<keyword id="KW-0694">RNA-binding</keyword>
<keyword id="KW-0820">tRNA-binding</keyword>